<evidence type="ECO:0000255" key="1">
    <source>
        <dbReference type="HAMAP-Rule" id="MF_00075"/>
    </source>
</evidence>
<dbReference type="EMBL" id="CP000419">
    <property type="protein sequence ID" value="ABJ66999.1"/>
    <property type="molecule type" value="Genomic_DNA"/>
</dbReference>
<dbReference type="RefSeq" id="WP_001040189.1">
    <property type="nucleotide sequence ID" value="NC_008532.1"/>
</dbReference>
<dbReference type="SMR" id="Q03IH3"/>
<dbReference type="GeneID" id="98392414"/>
<dbReference type="KEGG" id="ste:STER_1885"/>
<dbReference type="HOGENOM" id="CLU_151267_1_0_9"/>
<dbReference type="GO" id="GO:0005829">
    <property type="term" value="C:cytosol"/>
    <property type="evidence" value="ECO:0007669"/>
    <property type="project" value="TreeGrafter"/>
</dbReference>
<dbReference type="GO" id="GO:0043022">
    <property type="term" value="F:ribosome binding"/>
    <property type="evidence" value="ECO:0007669"/>
    <property type="project" value="UniProtKB-UniRule"/>
</dbReference>
<dbReference type="GO" id="GO:0019843">
    <property type="term" value="F:rRNA binding"/>
    <property type="evidence" value="ECO:0007669"/>
    <property type="project" value="UniProtKB-UniRule"/>
</dbReference>
<dbReference type="GO" id="GO:0003743">
    <property type="term" value="F:translation initiation factor activity"/>
    <property type="evidence" value="ECO:0007669"/>
    <property type="project" value="UniProtKB-UniRule"/>
</dbReference>
<dbReference type="CDD" id="cd04451">
    <property type="entry name" value="S1_IF1"/>
    <property type="match status" value="1"/>
</dbReference>
<dbReference type="FunFam" id="2.40.50.140:FF:000002">
    <property type="entry name" value="Translation initiation factor IF-1"/>
    <property type="match status" value="1"/>
</dbReference>
<dbReference type="Gene3D" id="2.40.50.140">
    <property type="entry name" value="Nucleic acid-binding proteins"/>
    <property type="match status" value="1"/>
</dbReference>
<dbReference type="HAMAP" id="MF_00075">
    <property type="entry name" value="IF_1"/>
    <property type="match status" value="1"/>
</dbReference>
<dbReference type="InterPro" id="IPR012340">
    <property type="entry name" value="NA-bd_OB-fold"/>
</dbReference>
<dbReference type="InterPro" id="IPR006196">
    <property type="entry name" value="RNA-binding_domain_S1_IF1"/>
</dbReference>
<dbReference type="InterPro" id="IPR003029">
    <property type="entry name" value="S1_domain"/>
</dbReference>
<dbReference type="InterPro" id="IPR004368">
    <property type="entry name" value="TIF_IF1"/>
</dbReference>
<dbReference type="NCBIfam" id="TIGR00008">
    <property type="entry name" value="infA"/>
    <property type="match status" value="1"/>
</dbReference>
<dbReference type="PANTHER" id="PTHR33370">
    <property type="entry name" value="TRANSLATION INITIATION FACTOR IF-1, CHLOROPLASTIC"/>
    <property type="match status" value="1"/>
</dbReference>
<dbReference type="PANTHER" id="PTHR33370:SF1">
    <property type="entry name" value="TRANSLATION INITIATION FACTOR IF-1, CHLOROPLASTIC"/>
    <property type="match status" value="1"/>
</dbReference>
<dbReference type="Pfam" id="PF01176">
    <property type="entry name" value="eIF-1a"/>
    <property type="match status" value="1"/>
</dbReference>
<dbReference type="SMART" id="SM00316">
    <property type="entry name" value="S1"/>
    <property type="match status" value="1"/>
</dbReference>
<dbReference type="SUPFAM" id="SSF50249">
    <property type="entry name" value="Nucleic acid-binding proteins"/>
    <property type="match status" value="1"/>
</dbReference>
<dbReference type="PROSITE" id="PS50832">
    <property type="entry name" value="S1_IF1_TYPE"/>
    <property type="match status" value="1"/>
</dbReference>
<protein>
    <recommendedName>
        <fullName evidence="1">Translation initiation factor IF-1</fullName>
    </recommendedName>
</protein>
<organism>
    <name type="scientific">Streptococcus thermophilus (strain ATCC BAA-491 / LMD-9)</name>
    <dbReference type="NCBI Taxonomy" id="322159"/>
    <lineage>
        <taxon>Bacteria</taxon>
        <taxon>Bacillati</taxon>
        <taxon>Bacillota</taxon>
        <taxon>Bacilli</taxon>
        <taxon>Lactobacillales</taxon>
        <taxon>Streptococcaceae</taxon>
        <taxon>Streptococcus</taxon>
    </lineage>
</organism>
<comment type="function">
    <text evidence="1">One of the essential components for the initiation of protein synthesis. Stabilizes the binding of IF-2 and IF-3 on the 30S subunit to which N-formylmethionyl-tRNA(fMet) subsequently binds. Helps modulate mRNA selection, yielding the 30S pre-initiation complex (PIC). Upon addition of the 50S ribosomal subunit IF-1, IF-2 and IF-3 are released leaving the mature 70S translation initiation complex.</text>
</comment>
<comment type="subunit">
    <text evidence="1">Component of the 30S ribosomal translation pre-initiation complex which assembles on the 30S ribosome in the order IF-2 and IF-3, IF-1 and N-formylmethionyl-tRNA(fMet); mRNA recruitment can occur at any time during PIC assembly.</text>
</comment>
<comment type="subcellular location">
    <subcellularLocation>
        <location evidence="1">Cytoplasm</location>
    </subcellularLocation>
</comment>
<comment type="similarity">
    <text evidence="1">Belongs to the IF-1 family.</text>
</comment>
<sequence length="72" mass="8273">MAKEDVIEIEGKVVETMPNAMFTVELENGHQILATVSGKIRKNYIRILVGDRVTVEMSPYDLTRGRITYRFK</sequence>
<name>IF1_STRTD</name>
<proteinExistence type="inferred from homology"/>
<accession>Q03IH3</accession>
<gene>
    <name evidence="1" type="primary">infA</name>
    <name type="ordered locus">STER_1885</name>
</gene>
<feature type="chain" id="PRO_0000338940" description="Translation initiation factor IF-1">
    <location>
        <begin position="1"/>
        <end position="72"/>
    </location>
</feature>
<feature type="domain" description="S1-like" evidence="1">
    <location>
        <begin position="1"/>
        <end position="72"/>
    </location>
</feature>
<reference key="1">
    <citation type="journal article" date="2006" name="Proc. Natl. Acad. Sci. U.S.A.">
        <title>Comparative genomics of the lactic acid bacteria.</title>
        <authorList>
            <person name="Makarova K.S."/>
            <person name="Slesarev A."/>
            <person name="Wolf Y.I."/>
            <person name="Sorokin A."/>
            <person name="Mirkin B."/>
            <person name="Koonin E.V."/>
            <person name="Pavlov A."/>
            <person name="Pavlova N."/>
            <person name="Karamychev V."/>
            <person name="Polouchine N."/>
            <person name="Shakhova V."/>
            <person name="Grigoriev I."/>
            <person name="Lou Y."/>
            <person name="Rohksar D."/>
            <person name="Lucas S."/>
            <person name="Huang K."/>
            <person name="Goodstein D.M."/>
            <person name="Hawkins T."/>
            <person name="Plengvidhya V."/>
            <person name="Welker D."/>
            <person name="Hughes J."/>
            <person name="Goh Y."/>
            <person name="Benson A."/>
            <person name="Baldwin K."/>
            <person name="Lee J.-H."/>
            <person name="Diaz-Muniz I."/>
            <person name="Dosti B."/>
            <person name="Smeianov V."/>
            <person name="Wechter W."/>
            <person name="Barabote R."/>
            <person name="Lorca G."/>
            <person name="Altermann E."/>
            <person name="Barrangou R."/>
            <person name="Ganesan B."/>
            <person name="Xie Y."/>
            <person name="Rawsthorne H."/>
            <person name="Tamir D."/>
            <person name="Parker C."/>
            <person name="Breidt F."/>
            <person name="Broadbent J.R."/>
            <person name="Hutkins R."/>
            <person name="O'Sullivan D."/>
            <person name="Steele J."/>
            <person name="Unlu G."/>
            <person name="Saier M.H. Jr."/>
            <person name="Klaenhammer T."/>
            <person name="Richardson P."/>
            <person name="Kozyavkin S."/>
            <person name="Weimer B.C."/>
            <person name="Mills D.A."/>
        </authorList>
    </citation>
    <scope>NUCLEOTIDE SEQUENCE [LARGE SCALE GENOMIC DNA]</scope>
    <source>
        <strain>ATCC BAA-491 / LMD-9</strain>
    </source>
</reference>
<keyword id="KW-0963">Cytoplasm</keyword>
<keyword id="KW-0396">Initiation factor</keyword>
<keyword id="KW-0648">Protein biosynthesis</keyword>
<keyword id="KW-0694">RNA-binding</keyword>
<keyword id="KW-0699">rRNA-binding</keyword>